<organism>
    <name type="scientific">Lactobacillus acidophilus (strain ATCC 700396 / NCK56 / N2 / NCFM)</name>
    <dbReference type="NCBI Taxonomy" id="272621"/>
    <lineage>
        <taxon>Bacteria</taxon>
        <taxon>Bacillati</taxon>
        <taxon>Bacillota</taxon>
        <taxon>Bacilli</taxon>
        <taxon>Lactobacillales</taxon>
        <taxon>Lactobacillaceae</taxon>
        <taxon>Lactobacillus</taxon>
    </lineage>
</organism>
<accession>Q5FM88</accession>
<feature type="chain" id="PRO_1000068087" description="Large ribosomal subunit protein uL23">
    <location>
        <begin position="1"/>
        <end position="100"/>
    </location>
</feature>
<evidence type="ECO:0000255" key="1">
    <source>
        <dbReference type="HAMAP-Rule" id="MF_01369"/>
    </source>
</evidence>
<evidence type="ECO:0000305" key="2"/>
<sequence length="100" mass="11519">MDARDIILRPVITEKSTNLMDDKKYTFDVLLTATKTQVRNAVEEIFDVKVKSVNIMNVRGKDKRVGRYTGKTARRRKAIVALTDDSNDIKIFQENTEDNK</sequence>
<proteinExistence type="inferred from homology"/>
<gene>
    <name evidence="1" type="primary">rplW</name>
    <name type="ordered locus">LBA0293</name>
</gene>
<keyword id="KW-1185">Reference proteome</keyword>
<keyword id="KW-0687">Ribonucleoprotein</keyword>
<keyword id="KW-0689">Ribosomal protein</keyword>
<keyword id="KW-0694">RNA-binding</keyword>
<keyword id="KW-0699">rRNA-binding</keyword>
<dbReference type="EMBL" id="CP000033">
    <property type="protein sequence ID" value="AAV42186.1"/>
    <property type="molecule type" value="Genomic_DNA"/>
</dbReference>
<dbReference type="RefSeq" id="WP_003549026.1">
    <property type="nucleotide sequence ID" value="NC_006814.3"/>
</dbReference>
<dbReference type="RefSeq" id="YP_193217.1">
    <property type="nucleotide sequence ID" value="NC_006814.3"/>
</dbReference>
<dbReference type="SMR" id="Q5FM88"/>
<dbReference type="STRING" id="272621.LBA0293"/>
<dbReference type="KEGG" id="lac:LBA0293"/>
<dbReference type="PATRIC" id="fig|272621.13.peg.278"/>
<dbReference type="eggNOG" id="COG0089">
    <property type="taxonomic scope" value="Bacteria"/>
</dbReference>
<dbReference type="HOGENOM" id="CLU_037562_3_2_9"/>
<dbReference type="OrthoDB" id="9793353at2"/>
<dbReference type="BioCyc" id="LACI272621:G1G49-287-MONOMER"/>
<dbReference type="Proteomes" id="UP000006381">
    <property type="component" value="Chromosome"/>
</dbReference>
<dbReference type="GO" id="GO:1990904">
    <property type="term" value="C:ribonucleoprotein complex"/>
    <property type="evidence" value="ECO:0007669"/>
    <property type="project" value="UniProtKB-KW"/>
</dbReference>
<dbReference type="GO" id="GO:0005840">
    <property type="term" value="C:ribosome"/>
    <property type="evidence" value="ECO:0007669"/>
    <property type="project" value="UniProtKB-KW"/>
</dbReference>
<dbReference type="GO" id="GO:0019843">
    <property type="term" value="F:rRNA binding"/>
    <property type="evidence" value="ECO:0007669"/>
    <property type="project" value="UniProtKB-UniRule"/>
</dbReference>
<dbReference type="GO" id="GO:0003735">
    <property type="term" value="F:structural constituent of ribosome"/>
    <property type="evidence" value="ECO:0007669"/>
    <property type="project" value="InterPro"/>
</dbReference>
<dbReference type="GO" id="GO:0006412">
    <property type="term" value="P:translation"/>
    <property type="evidence" value="ECO:0007669"/>
    <property type="project" value="UniProtKB-UniRule"/>
</dbReference>
<dbReference type="FunFam" id="3.30.70.330:FF:000001">
    <property type="entry name" value="50S ribosomal protein L23"/>
    <property type="match status" value="1"/>
</dbReference>
<dbReference type="Gene3D" id="3.30.70.330">
    <property type="match status" value="1"/>
</dbReference>
<dbReference type="HAMAP" id="MF_01369_B">
    <property type="entry name" value="Ribosomal_uL23_B"/>
    <property type="match status" value="1"/>
</dbReference>
<dbReference type="InterPro" id="IPR012677">
    <property type="entry name" value="Nucleotide-bd_a/b_plait_sf"/>
</dbReference>
<dbReference type="InterPro" id="IPR013025">
    <property type="entry name" value="Ribosomal_uL23-like"/>
</dbReference>
<dbReference type="InterPro" id="IPR012678">
    <property type="entry name" value="Ribosomal_uL23/eL15/eS24_sf"/>
</dbReference>
<dbReference type="NCBIfam" id="NF004363">
    <property type="entry name" value="PRK05738.2-4"/>
    <property type="match status" value="1"/>
</dbReference>
<dbReference type="PANTHER" id="PTHR11620">
    <property type="entry name" value="60S RIBOSOMAL PROTEIN L23A"/>
    <property type="match status" value="1"/>
</dbReference>
<dbReference type="Pfam" id="PF00276">
    <property type="entry name" value="Ribosomal_L23"/>
    <property type="match status" value="1"/>
</dbReference>
<dbReference type="SUPFAM" id="SSF54189">
    <property type="entry name" value="Ribosomal proteins S24e, L23 and L15e"/>
    <property type="match status" value="1"/>
</dbReference>
<comment type="function">
    <text evidence="1">One of the early assembly proteins it binds 23S rRNA. One of the proteins that surrounds the polypeptide exit tunnel on the outside of the ribosome. Forms the main docking site for trigger factor binding to the ribosome.</text>
</comment>
<comment type="subunit">
    <text evidence="1">Part of the 50S ribosomal subunit. Contacts protein L29, and trigger factor when it is bound to the ribosome.</text>
</comment>
<comment type="similarity">
    <text evidence="1">Belongs to the universal ribosomal protein uL23 family.</text>
</comment>
<name>RL23_LACAC</name>
<reference key="1">
    <citation type="journal article" date="2005" name="Proc. Natl. Acad. Sci. U.S.A.">
        <title>Complete genome sequence of the probiotic lactic acid bacterium Lactobacillus acidophilus NCFM.</title>
        <authorList>
            <person name="Altermann E."/>
            <person name="Russell W.M."/>
            <person name="Azcarate-Peril M.A."/>
            <person name="Barrangou R."/>
            <person name="Buck B.L."/>
            <person name="McAuliffe O."/>
            <person name="Souther N."/>
            <person name="Dobson A."/>
            <person name="Duong T."/>
            <person name="Callanan M."/>
            <person name="Lick S."/>
            <person name="Hamrick A."/>
            <person name="Cano R."/>
            <person name="Klaenhammer T.R."/>
        </authorList>
    </citation>
    <scope>NUCLEOTIDE SEQUENCE [LARGE SCALE GENOMIC DNA]</scope>
    <source>
        <strain>ATCC 700396 / NCK56 / N2 / NCFM</strain>
    </source>
</reference>
<protein>
    <recommendedName>
        <fullName evidence="1">Large ribosomal subunit protein uL23</fullName>
    </recommendedName>
    <alternativeName>
        <fullName evidence="2">50S ribosomal protein L23</fullName>
    </alternativeName>
</protein>